<evidence type="ECO:0000250" key="1"/>
<evidence type="ECO:0000305" key="2"/>
<keyword id="KW-0489">Methyltransferase</keyword>
<keyword id="KW-1185">Reference proteome</keyword>
<keyword id="KW-0949">S-adenosyl-L-methionine</keyword>
<keyword id="KW-0808">Transferase</keyword>
<feature type="chain" id="PRO_0000361161" description="Putative S-adenosyl-L-methionine-dependent methyltransferase MMAR_1058">
    <location>
        <begin position="1"/>
        <end position="300"/>
    </location>
</feature>
<feature type="binding site" evidence="1">
    <location>
        <position position="127"/>
    </location>
    <ligand>
        <name>S-adenosyl-L-methionine</name>
        <dbReference type="ChEBI" id="CHEBI:59789"/>
    </ligand>
</feature>
<feature type="binding site" evidence="1">
    <location>
        <begin position="156"/>
        <end position="157"/>
    </location>
    <ligand>
        <name>S-adenosyl-L-methionine</name>
        <dbReference type="ChEBI" id="CHEBI:59789"/>
    </ligand>
</feature>
<name>Y1058_MYCMM</name>
<sequence length="300" mass="33312">MNRRTDADSWDPASSVGATATMVAASRARASRGPDALLDDRLAEPLVRAVGLQPLVRMIDGDTAVDDPPSSPRSLNEQIAVRTRYFDDFFTAAGAGGIRQAVILASGLDTRAYRLNWPSGMTVYEIDQPQVIEFKTRTLAEFGALPCPDHRPIGIDLREDWPSALRQRGFDAGQPTAWIAEGLLVYLPPEAQDRLFDNIAELSTPGSQVATEHFPDPNGFSGPRAQRLSERWRRMGLDLDMAELIYHGDRNTVIDYLADHGWRVRARTFEEMHAHNGFEPPDDEMMALFGGMSYVTGIRK</sequence>
<protein>
    <recommendedName>
        <fullName>Putative S-adenosyl-L-methionine-dependent methyltransferase MMAR_1058</fullName>
        <ecNumber>2.1.1.-</ecNumber>
    </recommendedName>
</protein>
<accession>B2HCU4</accession>
<reference key="1">
    <citation type="journal article" date="2008" name="Genome Res.">
        <title>Insights from the complete genome sequence of Mycobacterium marinum on the evolution of Mycobacterium tuberculosis.</title>
        <authorList>
            <person name="Stinear T.P."/>
            <person name="Seemann T."/>
            <person name="Harrison P.F."/>
            <person name="Jenkin G.A."/>
            <person name="Davies J.K."/>
            <person name="Johnson P.D."/>
            <person name="Abdellah Z."/>
            <person name="Arrowsmith C."/>
            <person name="Chillingworth T."/>
            <person name="Churcher C."/>
            <person name="Clarke K."/>
            <person name="Cronin A."/>
            <person name="Davis P."/>
            <person name="Goodhead I."/>
            <person name="Holroyd N."/>
            <person name="Jagels K."/>
            <person name="Lord A."/>
            <person name="Moule S."/>
            <person name="Mungall K."/>
            <person name="Norbertczak H."/>
            <person name="Quail M.A."/>
            <person name="Rabbinowitsch E."/>
            <person name="Walker D."/>
            <person name="White B."/>
            <person name="Whitehead S."/>
            <person name="Small P.L."/>
            <person name="Brosch R."/>
            <person name="Ramakrishnan L."/>
            <person name="Fischbach M.A."/>
            <person name="Parkhill J."/>
            <person name="Cole S.T."/>
        </authorList>
    </citation>
    <scope>NUCLEOTIDE SEQUENCE [LARGE SCALE GENOMIC DNA]</scope>
    <source>
        <strain>ATCC BAA-535 / M</strain>
    </source>
</reference>
<organism>
    <name type="scientific">Mycobacterium marinum (strain ATCC BAA-535 / M)</name>
    <dbReference type="NCBI Taxonomy" id="216594"/>
    <lineage>
        <taxon>Bacteria</taxon>
        <taxon>Bacillati</taxon>
        <taxon>Actinomycetota</taxon>
        <taxon>Actinomycetes</taxon>
        <taxon>Mycobacteriales</taxon>
        <taxon>Mycobacteriaceae</taxon>
        <taxon>Mycobacterium</taxon>
        <taxon>Mycobacterium ulcerans group</taxon>
    </lineage>
</organism>
<dbReference type="EC" id="2.1.1.-"/>
<dbReference type="EMBL" id="CP000854">
    <property type="protein sequence ID" value="ACC39516.1"/>
    <property type="molecule type" value="Genomic_DNA"/>
</dbReference>
<dbReference type="RefSeq" id="WP_012392956.1">
    <property type="nucleotide sequence ID" value="NC_010612.1"/>
</dbReference>
<dbReference type="SMR" id="B2HCU4"/>
<dbReference type="STRING" id="216594.MMAR_1058"/>
<dbReference type="KEGG" id="mmi:MMAR_1058"/>
<dbReference type="eggNOG" id="COG3315">
    <property type="taxonomic scope" value="Bacteria"/>
</dbReference>
<dbReference type="HOGENOM" id="CLU_056160_2_1_11"/>
<dbReference type="OrthoDB" id="9806164at2"/>
<dbReference type="Proteomes" id="UP000001190">
    <property type="component" value="Chromosome"/>
</dbReference>
<dbReference type="GO" id="GO:0008168">
    <property type="term" value="F:methyltransferase activity"/>
    <property type="evidence" value="ECO:0007669"/>
    <property type="project" value="UniProtKB-KW"/>
</dbReference>
<dbReference type="GO" id="GO:0032259">
    <property type="term" value="P:methylation"/>
    <property type="evidence" value="ECO:0007669"/>
    <property type="project" value="UniProtKB-KW"/>
</dbReference>
<dbReference type="Gene3D" id="3.40.50.150">
    <property type="entry name" value="Vaccinia Virus protein VP39"/>
    <property type="match status" value="1"/>
</dbReference>
<dbReference type="InterPro" id="IPR007213">
    <property type="entry name" value="Ppm1/Ppm2/Tcmp"/>
</dbReference>
<dbReference type="InterPro" id="IPR029063">
    <property type="entry name" value="SAM-dependent_MTases_sf"/>
</dbReference>
<dbReference type="InterPro" id="IPR011610">
    <property type="entry name" value="SAM_mthyl_Trfase_ML2640-like"/>
</dbReference>
<dbReference type="NCBIfam" id="TIGR00027">
    <property type="entry name" value="mthyl_TIGR00027"/>
    <property type="match status" value="1"/>
</dbReference>
<dbReference type="PANTHER" id="PTHR43619">
    <property type="entry name" value="S-ADENOSYL-L-METHIONINE-DEPENDENT METHYLTRANSFERASE YKTD-RELATED"/>
    <property type="match status" value="1"/>
</dbReference>
<dbReference type="PANTHER" id="PTHR43619:SF2">
    <property type="entry name" value="S-ADENOSYL-L-METHIONINE-DEPENDENT METHYLTRANSFERASES SUPERFAMILY PROTEIN"/>
    <property type="match status" value="1"/>
</dbReference>
<dbReference type="Pfam" id="PF04072">
    <property type="entry name" value="LCM"/>
    <property type="match status" value="1"/>
</dbReference>
<dbReference type="SUPFAM" id="SSF53335">
    <property type="entry name" value="S-adenosyl-L-methionine-dependent methyltransferases"/>
    <property type="match status" value="1"/>
</dbReference>
<gene>
    <name type="ordered locus">MMAR_1058</name>
</gene>
<proteinExistence type="inferred from homology"/>
<comment type="function">
    <text evidence="1">Exhibits S-adenosyl-L-methionine-dependent methyltransferase activity.</text>
</comment>
<comment type="similarity">
    <text evidence="2">Belongs to the UPF0677 family.</text>
</comment>